<name>BR1A_RANDY</name>
<comment type="function">
    <text evidence="2">Antimicrobial peptide. Has low activity against the Gram-positive bacterium S.aureus and the Gram-negative bacterium E.coli (MIC&lt;15 uM). Has a strong hemolytic activity.</text>
</comment>
<comment type="subcellular location">
    <subcellularLocation>
        <location>Secreted</location>
    </subcellularLocation>
</comment>
<comment type="tissue specificity">
    <text>Expressed by the skin glands.</text>
</comment>
<comment type="mass spectrometry" mass="2222.5" method="MALDI" evidence="2"/>
<comment type="similarity">
    <text evidence="3">Belongs to the frog skin active peptide (FSAP) family. Brevinin subfamily.</text>
</comment>
<proteinExistence type="evidence at protein level"/>
<reference key="1">
    <citation type="journal article" date="2007" name="Toxicon">
        <title>Cytolytic peptides belonging to the brevinin-1 and brevinin-2 families isolated from the skin of the Japanese brown frog, Rana dybowskii.</title>
        <authorList>
            <person name="Conlon J.M."/>
            <person name="Kolodziejek J."/>
            <person name="Nowotny N."/>
            <person name="Leprince J."/>
            <person name="Vaudry H."/>
            <person name="Coquet L."/>
            <person name="Jouenne T."/>
            <person name="Iwamuro S."/>
        </authorList>
    </citation>
    <scope>PROTEIN SEQUENCE</scope>
    <scope>FUNCTION</scope>
    <scope>MASS SPECTROMETRY</scope>
    <source>
        <tissue>Skin secretion</tissue>
    </source>
</reference>
<sequence length="20" mass="2226">FLSLALAALPKFLCLVFKKC</sequence>
<organism>
    <name type="scientific">Rana dybowskii</name>
    <name type="common">Dybovsky's frog</name>
    <name type="synonym">Korean brown frog</name>
    <dbReference type="NCBI Taxonomy" id="71582"/>
    <lineage>
        <taxon>Eukaryota</taxon>
        <taxon>Metazoa</taxon>
        <taxon>Chordata</taxon>
        <taxon>Craniata</taxon>
        <taxon>Vertebrata</taxon>
        <taxon>Euteleostomi</taxon>
        <taxon>Amphibia</taxon>
        <taxon>Batrachia</taxon>
        <taxon>Anura</taxon>
        <taxon>Neobatrachia</taxon>
        <taxon>Ranoidea</taxon>
        <taxon>Ranidae</taxon>
        <taxon>Rana</taxon>
        <taxon>Rana</taxon>
    </lineage>
</organism>
<keyword id="KW-0878">Amphibian defense peptide</keyword>
<keyword id="KW-0044">Antibiotic</keyword>
<keyword id="KW-0929">Antimicrobial</keyword>
<keyword id="KW-0204">Cytolysis</keyword>
<keyword id="KW-0903">Direct protein sequencing</keyword>
<keyword id="KW-1015">Disulfide bond</keyword>
<keyword id="KW-0354">Hemolysis</keyword>
<keyword id="KW-0964">Secreted</keyword>
<feature type="peptide" id="PRO_0000311594" description="Brevinin-1DYa">
    <location>
        <begin position="1"/>
        <end position="20"/>
    </location>
</feature>
<feature type="disulfide bond" evidence="1">
    <location>
        <begin position="14"/>
        <end position="20"/>
    </location>
</feature>
<protein>
    <recommendedName>
        <fullName>Brevinin-1DYa</fullName>
    </recommendedName>
</protein>
<accession>P0C5W6</accession>
<dbReference type="GO" id="GO:0005576">
    <property type="term" value="C:extracellular region"/>
    <property type="evidence" value="ECO:0007669"/>
    <property type="project" value="UniProtKB-SubCell"/>
</dbReference>
<dbReference type="GO" id="GO:0042742">
    <property type="term" value="P:defense response to bacterium"/>
    <property type="evidence" value="ECO:0007669"/>
    <property type="project" value="UniProtKB-KW"/>
</dbReference>
<dbReference type="GO" id="GO:0031640">
    <property type="term" value="P:killing of cells of another organism"/>
    <property type="evidence" value="ECO:0007669"/>
    <property type="project" value="UniProtKB-KW"/>
</dbReference>
<dbReference type="InterPro" id="IPR012520">
    <property type="entry name" value="Antimicrobial_frog_1"/>
</dbReference>
<dbReference type="Pfam" id="PF08018">
    <property type="entry name" value="Antimicrobial_1"/>
    <property type="match status" value="1"/>
</dbReference>
<evidence type="ECO:0000250" key="1"/>
<evidence type="ECO:0000269" key="2">
    <source>
    </source>
</evidence>
<evidence type="ECO:0000305" key="3"/>